<gene>
    <name evidence="1" type="primary">ruvA</name>
    <name type="ordered locus">Geob_2324</name>
</gene>
<comment type="function">
    <text evidence="1">The RuvA-RuvB-RuvC complex processes Holliday junction (HJ) DNA during genetic recombination and DNA repair, while the RuvA-RuvB complex plays an important role in the rescue of blocked DNA replication forks via replication fork reversal (RFR). RuvA specifically binds to HJ cruciform DNA, conferring on it an open structure. The RuvB hexamer acts as an ATP-dependent pump, pulling dsDNA into and through the RuvAB complex. HJ branch migration allows RuvC to scan DNA until it finds its consensus sequence, where it cleaves and resolves the cruciform DNA.</text>
</comment>
<comment type="subunit">
    <text evidence="1">Homotetramer. Forms an RuvA(8)-RuvB(12)-Holliday junction (HJ) complex. HJ DNA is sandwiched between 2 RuvA tetramers; dsDNA enters through RuvA and exits via RuvB. An RuvB hexamer assembles on each DNA strand where it exits the tetramer. Each RuvB hexamer is contacted by two RuvA subunits (via domain III) on 2 adjacent RuvB subunits; this complex drives branch migration. In the full resolvosome a probable DNA-RuvA(4)-RuvB(12)-RuvC(2) complex forms which resolves the HJ.</text>
</comment>
<comment type="subcellular location">
    <subcellularLocation>
        <location evidence="1">Cytoplasm</location>
    </subcellularLocation>
</comment>
<comment type="domain">
    <text evidence="1">Has three domains with a flexible linker between the domains II and III and assumes an 'L' shape. Domain III is highly mobile and contacts RuvB.</text>
</comment>
<comment type="similarity">
    <text evidence="1">Belongs to the RuvA family.</text>
</comment>
<reference key="1">
    <citation type="submission" date="2009-01" db="EMBL/GenBank/DDBJ databases">
        <title>Complete sequence of Geobacter sp. FRC-32.</title>
        <authorList>
            <consortium name="US DOE Joint Genome Institute"/>
            <person name="Lucas S."/>
            <person name="Copeland A."/>
            <person name="Lapidus A."/>
            <person name="Glavina del Rio T."/>
            <person name="Dalin E."/>
            <person name="Tice H."/>
            <person name="Bruce D."/>
            <person name="Goodwin L."/>
            <person name="Pitluck S."/>
            <person name="Saunders E."/>
            <person name="Brettin T."/>
            <person name="Detter J.C."/>
            <person name="Han C."/>
            <person name="Larimer F."/>
            <person name="Land M."/>
            <person name="Hauser L."/>
            <person name="Kyrpides N."/>
            <person name="Ovchinnikova G."/>
            <person name="Kostka J."/>
            <person name="Richardson P."/>
        </authorList>
    </citation>
    <scope>NUCLEOTIDE SEQUENCE [LARGE SCALE GENOMIC DNA]</scope>
    <source>
        <strain>DSM 22248 / JCM 15807 / FRC-32</strain>
    </source>
</reference>
<name>RUVA_GEODF</name>
<feature type="chain" id="PRO_1000195148" description="Holliday junction branch migration complex subunit RuvA">
    <location>
        <begin position="1"/>
        <end position="199"/>
    </location>
</feature>
<feature type="region of interest" description="Domain I" evidence="1">
    <location>
        <begin position="1"/>
        <end position="64"/>
    </location>
</feature>
<feature type="region of interest" description="Domain II" evidence="1">
    <location>
        <begin position="65"/>
        <end position="143"/>
    </location>
</feature>
<feature type="region of interest" description="Flexible linker" evidence="1">
    <location>
        <begin position="144"/>
        <end position="148"/>
    </location>
</feature>
<feature type="region of interest" description="Domain III" evidence="1">
    <location>
        <begin position="149"/>
        <end position="199"/>
    </location>
</feature>
<keyword id="KW-0963">Cytoplasm</keyword>
<keyword id="KW-0227">DNA damage</keyword>
<keyword id="KW-0233">DNA recombination</keyword>
<keyword id="KW-0234">DNA repair</keyword>
<keyword id="KW-0238">DNA-binding</keyword>
<keyword id="KW-1185">Reference proteome</keyword>
<sequence length="199" mass="21566">MIALLTGKLAHKSPDFIILDVNGVGYRVQIPFSTYYALPEGGSSVSLNIFTHVKEDAINLYGFRTMEEKEMFQLLISVSGIGPKLGNGILSNIEAQNLSDALIRGDLARLATIPGIGKKTAERLVLELREKVKKLGHGPLQQDVAPADAHNDMRDDVVSALVNLGYKEAVVQKTVDEIGVAADATVESLLKQALKKLMK</sequence>
<protein>
    <recommendedName>
        <fullName evidence="1">Holliday junction branch migration complex subunit RuvA</fullName>
    </recommendedName>
</protein>
<evidence type="ECO:0000255" key="1">
    <source>
        <dbReference type="HAMAP-Rule" id="MF_00031"/>
    </source>
</evidence>
<dbReference type="EMBL" id="CP001390">
    <property type="protein sequence ID" value="ACM20678.1"/>
    <property type="molecule type" value="Genomic_DNA"/>
</dbReference>
<dbReference type="RefSeq" id="WP_012647407.1">
    <property type="nucleotide sequence ID" value="NC_011979.1"/>
</dbReference>
<dbReference type="SMR" id="B9LZC5"/>
<dbReference type="STRING" id="316067.Geob_2324"/>
<dbReference type="KEGG" id="geo:Geob_2324"/>
<dbReference type="eggNOG" id="COG0632">
    <property type="taxonomic scope" value="Bacteria"/>
</dbReference>
<dbReference type="HOGENOM" id="CLU_087936_0_0_7"/>
<dbReference type="OrthoDB" id="5293449at2"/>
<dbReference type="Proteomes" id="UP000007721">
    <property type="component" value="Chromosome"/>
</dbReference>
<dbReference type="GO" id="GO:0005737">
    <property type="term" value="C:cytoplasm"/>
    <property type="evidence" value="ECO:0007669"/>
    <property type="project" value="UniProtKB-SubCell"/>
</dbReference>
<dbReference type="GO" id="GO:0009379">
    <property type="term" value="C:Holliday junction helicase complex"/>
    <property type="evidence" value="ECO:0007669"/>
    <property type="project" value="InterPro"/>
</dbReference>
<dbReference type="GO" id="GO:0048476">
    <property type="term" value="C:Holliday junction resolvase complex"/>
    <property type="evidence" value="ECO:0007669"/>
    <property type="project" value="UniProtKB-UniRule"/>
</dbReference>
<dbReference type="GO" id="GO:0005524">
    <property type="term" value="F:ATP binding"/>
    <property type="evidence" value="ECO:0007669"/>
    <property type="project" value="InterPro"/>
</dbReference>
<dbReference type="GO" id="GO:0000400">
    <property type="term" value="F:four-way junction DNA binding"/>
    <property type="evidence" value="ECO:0007669"/>
    <property type="project" value="UniProtKB-UniRule"/>
</dbReference>
<dbReference type="GO" id="GO:0009378">
    <property type="term" value="F:four-way junction helicase activity"/>
    <property type="evidence" value="ECO:0007669"/>
    <property type="project" value="InterPro"/>
</dbReference>
<dbReference type="GO" id="GO:0006310">
    <property type="term" value="P:DNA recombination"/>
    <property type="evidence" value="ECO:0007669"/>
    <property type="project" value="UniProtKB-UniRule"/>
</dbReference>
<dbReference type="GO" id="GO:0006281">
    <property type="term" value="P:DNA repair"/>
    <property type="evidence" value="ECO:0007669"/>
    <property type="project" value="UniProtKB-UniRule"/>
</dbReference>
<dbReference type="CDD" id="cd14332">
    <property type="entry name" value="UBA_RuvA_C"/>
    <property type="match status" value="1"/>
</dbReference>
<dbReference type="Gene3D" id="1.10.150.20">
    <property type="entry name" value="5' to 3' exonuclease, C-terminal subdomain"/>
    <property type="match status" value="1"/>
</dbReference>
<dbReference type="Gene3D" id="1.10.8.10">
    <property type="entry name" value="DNA helicase RuvA subunit, C-terminal domain"/>
    <property type="match status" value="1"/>
</dbReference>
<dbReference type="Gene3D" id="2.40.50.140">
    <property type="entry name" value="Nucleic acid-binding proteins"/>
    <property type="match status" value="1"/>
</dbReference>
<dbReference type="HAMAP" id="MF_00031">
    <property type="entry name" value="DNA_HJ_migration_RuvA"/>
    <property type="match status" value="1"/>
</dbReference>
<dbReference type="InterPro" id="IPR013849">
    <property type="entry name" value="DNA_helicase_Holl-junc_RuvA_I"/>
</dbReference>
<dbReference type="InterPro" id="IPR003583">
    <property type="entry name" value="Hlx-hairpin-Hlx_DNA-bd_motif"/>
</dbReference>
<dbReference type="InterPro" id="IPR012340">
    <property type="entry name" value="NA-bd_OB-fold"/>
</dbReference>
<dbReference type="InterPro" id="IPR000085">
    <property type="entry name" value="RuvA"/>
</dbReference>
<dbReference type="InterPro" id="IPR010994">
    <property type="entry name" value="RuvA_2-like"/>
</dbReference>
<dbReference type="InterPro" id="IPR011114">
    <property type="entry name" value="RuvA_C"/>
</dbReference>
<dbReference type="InterPro" id="IPR036267">
    <property type="entry name" value="RuvA_C_sf"/>
</dbReference>
<dbReference type="NCBIfam" id="TIGR00084">
    <property type="entry name" value="ruvA"/>
    <property type="match status" value="1"/>
</dbReference>
<dbReference type="Pfam" id="PF14520">
    <property type="entry name" value="HHH_5"/>
    <property type="match status" value="1"/>
</dbReference>
<dbReference type="Pfam" id="PF07499">
    <property type="entry name" value="RuvA_C"/>
    <property type="match status" value="1"/>
</dbReference>
<dbReference type="Pfam" id="PF01330">
    <property type="entry name" value="RuvA_N"/>
    <property type="match status" value="1"/>
</dbReference>
<dbReference type="SMART" id="SM00278">
    <property type="entry name" value="HhH1"/>
    <property type="match status" value="2"/>
</dbReference>
<dbReference type="SUPFAM" id="SSF46929">
    <property type="entry name" value="DNA helicase RuvA subunit, C-terminal domain"/>
    <property type="match status" value="1"/>
</dbReference>
<dbReference type="SUPFAM" id="SSF50249">
    <property type="entry name" value="Nucleic acid-binding proteins"/>
    <property type="match status" value="1"/>
</dbReference>
<dbReference type="SUPFAM" id="SSF47781">
    <property type="entry name" value="RuvA domain 2-like"/>
    <property type="match status" value="1"/>
</dbReference>
<proteinExistence type="inferred from homology"/>
<organism>
    <name type="scientific">Geotalea daltonii (strain DSM 22248 / JCM 15807 / FRC-32)</name>
    <name type="common">Geobacter daltonii</name>
    <dbReference type="NCBI Taxonomy" id="316067"/>
    <lineage>
        <taxon>Bacteria</taxon>
        <taxon>Pseudomonadati</taxon>
        <taxon>Thermodesulfobacteriota</taxon>
        <taxon>Desulfuromonadia</taxon>
        <taxon>Geobacterales</taxon>
        <taxon>Geobacteraceae</taxon>
        <taxon>Geotalea</taxon>
    </lineage>
</organism>
<accession>B9LZC5</accession>